<name>RK12_PORPU</name>
<proteinExistence type="inferred from homology"/>
<sequence length="129" mass="13541">MSTKVENILEELKSLNLLEAAELVKQIEETFDVDASAASGGVMMAAPSSAPAASDVEEKTEFDVVLEEVPAPKKIAVLKVVRSLTGLGLKEAKDLVESAPKTLKEGASKDDAEAMKKQLEDAGATVGVK</sequence>
<protein>
    <recommendedName>
        <fullName evidence="1">Large ribosomal subunit protein bL12c</fullName>
    </recommendedName>
    <alternativeName>
        <fullName evidence="2">50S ribosomal protein L12, chloroplastic</fullName>
    </alternativeName>
</protein>
<evidence type="ECO:0000255" key="1">
    <source>
        <dbReference type="HAMAP-Rule" id="MF_00368"/>
    </source>
</evidence>
<evidence type="ECO:0000305" key="2"/>
<feature type="chain" id="PRO_0000157622" description="Large ribosomal subunit protein bL12c">
    <location>
        <begin position="1"/>
        <end position="129"/>
    </location>
</feature>
<geneLocation type="chloroplast"/>
<organism>
    <name type="scientific">Porphyra purpurea</name>
    <name type="common">Red seaweed</name>
    <name type="synonym">Ulva purpurea</name>
    <dbReference type="NCBI Taxonomy" id="2787"/>
    <lineage>
        <taxon>Eukaryota</taxon>
        <taxon>Rhodophyta</taxon>
        <taxon>Bangiophyceae</taxon>
        <taxon>Bangiales</taxon>
        <taxon>Bangiaceae</taxon>
        <taxon>Porphyra</taxon>
    </lineage>
</organism>
<gene>
    <name evidence="1" type="primary">rpl12</name>
</gene>
<keyword id="KW-0150">Chloroplast</keyword>
<keyword id="KW-0934">Plastid</keyword>
<keyword id="KW-0687">Ribonucleoprotein</keyword>
<keyword id="KW-0689">Ribosomal protein</keyword>
<dbReference type="EMBL" id="U38804">
    <property type="protein sequence ID" value="AAC08225.1"/>
    <property type="molecule type" value="Genomic_DNA"/>
</dbReference>
<dbReference type="PIR" id="S73260">
    <property type="entry name" value="S73260"/>
</dbReference>
<dbReference type="RefSeq" id="NP_053949.1">
    <property type="nucleotide sequence ID" value="NC_000925.1"/>
</dbReference>
<dbReference type="SMR" id="P51339"/>
<dbReference type="GeneID" id="809975"/>
<dbReference type="GO" id="GO:0009507">
    <property type="term" value="C:chloroplast"/>
    <property type="evidence" value="ECO:0007669"/>
    <property type="project" value="UniProtKB-SubCell"/>
</dbReference>
<dbReference type="GO" id="GO:0022625">
    <property type="term" value="C:cytosolic large ribosomal subunit"/>
    <property type="evidence" value="ECO:0007669"/>
    <property type="project" value="TreeGrafter"/>
</dbReference>
<dbReference type="GO" id="GO:0003729">
    <property type="term" value="F:mRNA binding"/>
    <property type="evidence" value="ECO:0007669"/>
    <property type="project" value="TreeGrafter"/>
</dbReference>
<dbReference type="GO" id="GO:0003735">
    <property type="term" value="F:structural constituent of ribosome"/>
    <property type="evidence" value="ECO:0007669"/>
    <property type="project" value="InterPro"/>
</dbReference>
<dbReference type="GO" id="GO:0006412">
    <property type="term" value="P:translation"/>
    <property type="evidence" value="ECO:0007669"/>
    <property type="project" value="UniProtKB-UniRule"/>
</dbReference>
<dbReference type="CDD" id="cd00387">
    <property type="entry name" value="Ribosomal_L7_L12"/>
    <property type="match status" value="1"/>
</dbReference>
<dbReference type="FunFam" id="3.30.1390.10:FF:000001">
    <property type="entry name" value="50S ribosomal protein L7/L12"/>
    <property type="match status" value="1"/>
</dbReference>
<dbReference type="Gene3D" id="3.30.1390.10">
    <property type="match status" value="1"/>
</dbReference>
<dbReference type="Gene3D" id="1.20.5.710">
    <property type="entry name" value="Single helix bin"/>
    <property type="match status" value="1"/>
</dbReference>
<dbReference type="HAMAP" id="MF_00368">
    <property type="entry name" value="Ribosomal_bL12"/>
    <property type="match status" value="1"/>
</dbReference>
<dbReference type="InterPro" id="IPR000206">
    <property type="entry name" value="Ribosomal_bL12"/>
</dbReference>
<dbReference type="InterPro" id="IPR013823">
    <property type="entry name" value="Ribosomal_bL12_C"/>
</dbReference>
<dbReference type="InterPro" id="IPR014719">
    <property type="entry name" value="Ribosomal_bL12_C/ClpS-like"/>
</dbReference>
<dbReference type="InterPro" id="IPR008932">
    <property type="entry name" value="Ribosomal_bL12_oligo"/>
</dbReference>
<dbReference type="InterPro" id="IPR036235">
    <property type="entry name" value="Ribosomal_bL12_oligo_N_sf"/>
</dbReference>
<dbReference type="NCBIfam" id="TIGR00855">
    <property type="entry name" value="L12"/>
    <property type="match status" value="1"/>
</dbReference>
<dbReference type="PANTHER" id="PTHR45987">
    <property type="entry name" value="39S RIBOSOMAL PROTEIN L12"/>
    <property type="match status" value="1"/>
</dbReference>
<dbReference type="PANTHER" id="PTHR45987:SF4">
    <property type="entry name" value="LARGE RIBOSOMAL SUBUNIT PROTEIN BL12M"/>
    <property type="match status" value="1"/>
</dbReference>
<dbReference type="Pfam" id="PF00542">
    <property type="entry name" value="Ribosomal_L12"/>
    <property type="match status" value="1"/>
</dbReference>
<dbReference type="Pfam" id="PF16320">
    <property type="entry name" value="Ribosomal_L12_N"/>
    <property type="match status" value="1"/>
</dbReference>
<dbReference type="SUPFAM" id="SSF54736">
    <property type="entry name" value="ClpS-like"/>
    <property type="match status" value="1"/>
</dbReference>
<dbReference type="SUPFAM" id="SSF48300">
    <property type="entry name" value="Ribosomal protein L7/12, oligomerisation (N-terminal) domain"/>
    <property type="match status" value="1"/>
</dbReference>
<accession>P51339</accession>
<reference key="1">
    <citation type="journal article" date="1995" name="Plant Mol. Biol. Rep.">
        <title>Complete nucleotide sequence of the Porphyra purpurea chloroplast genome.</title>
        <authorList>
            <person name="Reith M.E."/>
            <person name="Munholland J."/>
        </authorList>
    </citation>
    <scope>NUCLEOTIDE SEQUENCE [LARGE SCALE GENOMIC DNA]</scope>
    <source>
        <strain>Avonport</strain>
    </source>
</reference>
<comment type="function">
    <text evidence="1">Forms part of the ribosomal stalk which helps the ribosome interact with GTP-bound translation factors. Is thus essential for accurate translation.</text>
</comment>
<comment type="subunit">
    <text evidence="1">Homodimer. Part of the ribosomal stalk of the 50S ribosomal subunit. Forms a multimeric L10(L12)X complex, where L10 forms an elongated spine to which 2 to 4 L12 dimers bind in a sequential fashion. Binds GTP-bound translation factors.</text>
</comment>
<comment type="subcellular location">
    <subcellularLocation>
        <location>Plastid</location>
        <location>Chloroplast</location>
    </subcellularLocation>
</comment>
<comment type="similarity">
    <text evidence="1">Belongs to the bacterial ribosomal protein bL12 family.</text>
</comment>